<dbReference type="EMBL" id="AM942759">
    <property type="protein sequence ID" value="CAR46624.1"/>
    <property type="molecule type" value="Genomic_DNA"/>
</dbReference>
<dbReference type="RefSeq" id="WP_004246279.1">
    <property type="nucleotide sequence ID" value="NC_010554.1"/>
</dbReference>
<dbReference type="SMR" id="B4F280"/>
<dbReference type="EnsemblBacteria" id="CAR46624">
    <property type="protein sequence ID" value="CAR46624"/>
    <property type="gene ID" value="PMI3379"/>
</dbReference>
<dbReference type="GeneID" id="6799910"/>
<dbReference type="KEGG" id="pmr:PMI3379"/>
<dbReference type="eggNOG" id="COG0254">
    <property type="taxonomic scope" value="Bacteria"/>
</dbReference>
<dbReference type="HOGENOM" id="CLU_114306_2_1_6"/>
<dbReference type="Proteomes" id="UP000008319">
    <property type="component" value="Chromosome"/>
</dbReference>
<dbReference type="GO" id="GO:1990904">
    <property type="term" value="C:ribonucleoprotein complex"/>
    <property type="evidence" value="ECO:0007669"/>
    <property type="project" value="UniProtKB-KW"/>
</dbReference>
<dbReference type="GO" id="GO:0005840">
    <property type="term" value="C:ribosome"/>
    <property type="evidence" value="ECO:0007669"/>
    <property type="project" value="UniProtKB-KW"/>
</dbReference>
<dbReference type="GO" id="GO:0003735">
    <property type="term" value="F:structural constituent of ribosome"/>
    <property type="evidence" value="ECO:0007669"/>
    <property type="project" value="InterPro"/>
</dbReference>
<dbReference type="GO" id="GO:0006412">
    <property type="term" value="P:translation"/>
    <property type="evidence" value="ECO:0007669"/>
    <property type="project" value="UniProtKB-UniRule"/>
</dbReference>
<dbReference type="Gene3D" id="4.10.830.30">
    <property type="entry name" value="Ribosomal protein L31"/>
    <property type="match status" value="1"/>
</dbReference>
<dbReference type="HAMAP" id="MF_00502">
    <property type="entry name" value="Ribosomal_bL31_2"/>
    <property type="match status" value="1"/>
</dbReference>
<dbReference type="InterPro" id="IPR034704">
    <property type="entry name" value="Ribosomal_bL28/bL31-like_sf"/>
</dbReference>
<dbReference type="InterPro" id="IPR002150">
    <property type="entry name" value="Ribosomal_bL31"/>
</dbReference>
<dbReference type="InterPro" id="IPR027493">
    <property type="entry name" value="Ribosomal_bL31_B"/>
</dbReference>
<dbReference type="InterPro" id="IPR042105">
    <property type="entry name" value="Ribosomal_bL31_sf"/>
</dbReference>
<dbReference type="NCBIfam" id="TIGR00105">
    <property type="entry name" value="L31"/>
    <property type="match status" value="1"/>
</dbReference>
<dbReference type="NCBIfam" id="NF002462">
    <property type="entry name" value="PRK01678.1"/>
    <property type="match status" value="1"/>
</dbReference>
<dbReference type="PANTHER" id="PTHR33280">
    <property type="entry name" value="50S RIBOSOMAL PROTEIN L31, CHLOROPLASTIC"/>
    <property type="match status" value="1"/>
</dbReference>
<dbReference type="PANTHER" id="PTHR33280:SF1">
    <property type="entry name" value="LARGE RIBOSOMAL SUBUNIT PROTEIN BL31C"/>
    <property type="match status" value="1"/>
</dbReference>
<dbReference type="Pfam" id="PF01197">
    <property type="entry name" value="Ribosomal_L31"/>
    <property type="match status" value="1"/>
</dbReference>
<dbReference type="PRINTS" id="PR01249">
    <property type="entry name" value="RIBOSOMALL31"/>
</dbReference>
<dbReference type="SUPFAM" id="SSF143800">
    <property type="entry name" value="L28p-like"/>
    <property type="match status" value="1"/>
</dbReference>
<dbReference type="PROSITE" id="PS01143">
    <property type="entry name" value="RIBOSOMAL_L31"/>
    <property type="match status" value="1"/>
</dbReference>
<name>RL31B_PROMH</name>
<keyword id="KW-1185">Reference proteome</keyword>
<keyword id="KW-0687">Ribonucleoprotein</keyword>
<keyword id="KW-0689">Ribosomal protein</keyword>
<evidence type="ECO:0000255" key="1">
    <source>
        <dbReference type="HAMAP-Rule" id="MF_00502"/>
    </source>
</evidence>
<evidence type="ECO:0000305" key="2"/>
<accession>B4F280</accession>
<organism>
    <name type="scientific">Proteus mirabilis (strain HI4320)</name>
    <dbReference type="NCBI Taxonomy" id="529507"/>
    <lineage>
        <taxon>Bacteria</taxon>
        <taxon>Pseudomonadati</taxon>
        <taxon>Pseudomonadota</taxon>
        <taxon>Gammaproteobacteria</taxon>
        <taxon>Enterobacterales</taxon>
        <taxon>Morganellaceae</taxon>
        <taxon>Proteus</taxon>
    </lineage>
</organism>
<sequence>MKENIHPQYRTVIFHDTSVDAYFKVGSTIQTDKTIEYEGQRYPYVTLDVSSQSHPFYTGKQKTHSQEGNVARFNKRFGRFVN</sequence>
<reference key="1">
    <citation type="journal article" date="2008" name="J. Bacteriol.">
        <title>Complete genome sequence of uropathogenic Proteus mirabilis, a master of both adherence and motility.</title>
        <authorList>
            <person name="Pearson M.M."/>
            <person name="Sebaihia M."/>
            <person name="Churcher C."/>
            <person name="Quail M.A."/>
            <person name="Seshasayee A.S."/>
            <person name="Luscombe N.M."/>
            <person name="Abdellah Z."/>
            <person name="Arrosmith C."/>
            <person name="Atkin B."/>
            <person name="Chillingworth T."/>
            <person name="Hauser H."/>
            <person name="Jagels K."/>
            <person name="Moule S."/>
            <person name="Mungall K."/>
            <person name="Norbertczak H."/>
            <person name="Rabbinowitsch E."/>
            <person name="Walker D."/>
            <person name="Whithead S."/>
            <person name="Thomson N.R."/>
            <person name="Rather P.N."/>
            <person name="Parkhill J."/>
            <person name="Mobley H.L.T."/>
        </authorList>
    </citation>
    <scope>NUCLEOTIDE SEQUENCE [LARGE SCALE GENOMIC DNA]</scope>
    <source>
        <strain>HI4320</strain>
    </source>
</reference>
<comment type="subunit">
    <text evidence="1">Part of the 50S ribosomal subunit.</text>
</comment>
<comment type="similarity">
    <text evidence="1">Belongs to the bacterial ribosomal protein bL31 family. Type B subfamily.</text>
</comment>
<feature type="chain" id="PRO_1000126827" description="Large ribosomal subunit protein bL31B">
    <location>
        <begin position="1"/>
        <end position="82"/>
    </location>
</feature>
<proteinExistence type="inferred from homology"/>
<gene>
    <name evidence="1" type="primary">rpmE2</name>
    <name type="ordered locus">PMI3379</name>
</gene>
<protein>
    <recommendedName>
        <fullName evidence="1">Large ribosomal subunit protein bL31B</fullName>
    </recommendedName>
    <alternativeName>
        <fullName evidence="2">50S ribosomal protein L31 type B</fullName>
    </alternativeName>
</protein>